<sequence length="253" mass="27669">MQKLIMANWKMNGNSTSIKELCSGISQVQYDTSRVAIAVFPSSVYVKEVISQLPEKVGVGLQNITFYDDGAYTGEISARMLEDIGCDYLLIGHSERRSLFAESDEDVFKKLNKIIDTTITPVVCIGESLDDRQSGKLKQVLATQLSLILENLSVEQLAKVVIAYEPVWAIGTGVVASLEQIQETHQFIRSLLAKVDEKLAKNIKIVYGGSLKAENAKDILSLPNVDGGLIGGASLKAVEFNEIINQANKICTE</sequence>
<protein>
    <recommendedName>
        <fullName evidence="1">Triosephosphate isomerase</fullName>
        <shortName evidence="1">TIM</shortName>
        <shortName evidence="1">TPI</shortName>
        <ecNumber evidence="1">5.3.1.1</ecNumber>
    </recommendedName>
    <alternativeName>
        <fullName evidence="1">Triose-phosphate isomerase</fullName>
    </alternativeName>
</protein>
<comment type="function">
    <text evidence="1">Involved in the gluconeogenesis. Catalyzes stereospecifically the conversion of dihydroxyacetone phosphate (DHAP) to D-glyceraldehyde-3-phosphate (G3P).</text>
</comment>
<comment type="catalytic activity">
    <reaction evidence="1">
        <text>D-glyceraldehyde 3-phosphate = dihydroxyacetone phosphate</text>
        <dbReference type="Rhea" id="RHEA:18585"/>
        <dbReference type="ChEBI" id="CHEBI:57642"/>
        <dbReference type="ChEBI" id="CHEBI:59776"/>
        <dbReference type="EC" id="5.3.1.1"/>
    </reaction>
</comment>
<comment type="pathway">
    <text evidence="1">Carbohydrate biosynthesis; gluconeogenesis.</text>
</comment>
<comment type="pathway">
    <text evidence="1">Carbohydrate degradation; glycolysis; D-glyceraldehyde 3-phosphate from glycerone phosphate: step 1/1.</text>
</comment>
<comment type="subunit">
    <text evidence="1">Homodimer.</text>
</comment>
<comment type="subcellular location">
    <subcellularLocation>
        <location evidence="1">Cytoplasm</location>
    </subcellularLocation>
</comment>
<comment type="similarity">
    <text evidence="1">Belongs to the triosephosphate isomerase family.</text>
</comment>
<keyword id="KW-0963">Cytoplasm</keyword>
<keyword id="KW-0312">Gluconeogenesis</keyword>
<keyword id="KW-0324">Glycolysis</keyword>
<keyword id="KW-0413">Isomerase</keyword>
<dbReference type="EC" id="5.3.1.1" evidence="1"/>
<dbReference type="EMBL" id="CP000915">
    <property type="protein sequence ID" value="ACD30242.1"/>
    <property type="molecule type" value="Genomic_DNA"/>
</dbReference>
<dbReference type="SMR" id="B2SEZ7"/>
<dbReference type="KEGG" id="ftm:FTM_0144"/>
<dbReference type="HOGENOM" id="CLU_024251_2_3_6"/>
<dbReference type="UniPathway" id="UPA00109">
    <property type="reaction ID" value="UER00189"/>
</dbReference>
<dbReference type="UniPathway" id="UPA00138"/>
<dbReference type="GO" id="GO:0005829">
    <property type="term" value="C:cytosol"/>
    <property type="evidence" value="ECO:0007669"/>
    <property type="project" value="TreeGrafter"/>
</dbReference>
<dbReference type="GO" id="GO:0004807">
    <property type="term" value="F:triose-phosphate isomerase activity"/>
    <property type="evidence" value="ECO:0007669"/>
    <property type="project" value="UniProtKB-UniRule"/>
</dbReference>
<dbReference type="GO" id="GO:0006094">
    <property type="term" value="P:gluconeogenesis"/>
    <property type="evidence" value="ECO:0007669"/>
    <property type="project" value="UniProtKB-UniRule"/>
</dbReference>
<dbReference type="GO" id="GO:0046166">
    <property type="term" value="P:glyceraldehyde-3-phosphate biosynthetic process"/>
    <property type="evidence" value="ECO:0007669"/>
    <property type="project" value="TreeGrafter"/>
</dbReference>
<dbReference type="GO" id="GO:0019563">
    <property type="term" value="P:glycerol catabolic process"/>
    <property type="evidence" value="ECO:0007669"/>
    <property type="project" value="TreeGrafter"/>
</dbReference>
<dbReference type="GO" id="GO:0006096">
    <property type="term" value="P:glycolytic process"/>
    <property type="evidence" value="ECO:0007669"/>
    <property type="project" value="UniProtKB-UniRule"/>
</dbReference>
<dbReference type="CDD" id="cd00311">
    <property type="entry name" value="TIM"/>
    <property type="match status" value="1"/>
</dbReference>
<dbReference type="FunFam" id="3.20.20.70:FF:000016">
    <property type="entry name" value="Triosephosphate isomerase"/>
    <property type="match status" value="1"/>
</dbReference>
<dbReference type="Gene3D" id="3.20.20.70">
    <property type="entry name" value="Aldolase class I"/>
    <property type="match status" value="1"/>
</dbReference>
<dbReference type="HAMAP" id="MF_00147_B">
    <property type="entry name" value="TIM_B"/>
    <property type="match status" value="1"/>
</dbReference>
<dbReference type="InterPro" id="IPR013785">
    <property type="entry name" value="Aldolase_TIM"/>
</dbReference>
<dbReference type="InterPro" id="IPR035990">
    <property type="entry name" value="TIM_sf"/>
</dbReference>
<dbReference type="InterPro" id="IPR022896">
    <property type="entry name" value="TrioseP_Isoase_bac/euk"/>
</dbReference>
<dbReference type="InterPro" id="IPR000652">
    <property type="entry name" value="Triosephosphate_isomerase"/>
</dbReference>
<dbReference type="InterPro" id="IPR020861">
    <property type="entry name" value="Triosephosphate_isomerase_AS"/>
</dbReference>
<dbReference type="NCBIfam" id="TIGR00419">
    <property type="entry name" value="tim"/>
    <property type="match status" value="1"/>
</dbReference>
<dbReference type="PANTHER" id="PTHR21139">
    <property type="entry name" value="TRIOSEPHOSPHATE ISOMERASE"/>
    <property type="match status" value="1"/>
</dbReference>
<dbReference type="PANTHER" id="PTHR21139:SF42">
    <property type="entry name" value="TRIOSEPHOSPHATE ISOMERASE"/>
    <property type="match status" value="1"/>
</dbReference>
<dbReference type="Pfam" id="PF00121">
    <property type="entry name" value="TIM"/>
    <property type="match status" value="1"/>
</dbReference>
<dbReference type="SUPFAM" id="SSF51351">
    <property type="entry name" value="Triosephosphate isomerase (TIM)"/>
    <property type="match status" value="1"/>
</dbReference>
<dbReference type="PROSITE" id="PS00171">
    <property type="entry name" value="TIM_1"/>
    <property type="match status" value="1"/>
</dbReference>
<dbReference type="PROSITE" id="PS51440">
    <property type="entry name" value="TIM_2"/>
    <property type="match status" value="1"/>
</dbReference>
<organism>
    <name type="scientific">Francisella tularensis subsp. mediasiatica (strain FSC147)</name>
    <dbReference type="NCBI Taxonomy" id="441952"/>
    <lineage>
        <taxon>Bacteria</taxon>
        <taxon>Pseudomonadati</taxon>
        <taxon>Pseudomonadota</taxon>
        <taxon>Gammaproteobacteria</taxon>
        <taxon>Thiotrichales</taxon>
        <taxon>Francisellaceae</taxon>
        <taxon>Francisella</taxon>
    </lineage>
</organism>
<evidence type="ECO:0000255" key="1">
    <source>
        <dbReference type="HAMAP-Rule" id="MF_00147"/>
    </source>
</evidence>
<accession>B2SEZ7</accession>
<gene>
    <name evidence="1" type="primary">tpiA</name>
    <name type="ordered locus">FTM_0144</name>
</gene>
<reference key="1">
    <citation type="journal article" date="2009" name="PLoS Pathog.">
        <title>Molecular evolutionary consequences of niche restriction in Francisella tularensis, a facultative intracellular pathogen.</title>
        <authorList>
            <person name="Larsson P."/>
            <person name="Elfsmark D."/>
            <person name="Svensson K."/>
            <person name="Wikstroem P."/>
            <person name="Forsman M."/>
            <person name="Brettin T."/>
            <person name="Keim P."/>
            <person name="Johansson A."/>
        </authorList>
    </citation>
    <scope>NUCLEOTIDE SEQUENCE [LARGE SCALE GENOMIC DNA]</scope>
    <source>
        <strain>FSC147</strain>
    </source>
</reference>
<name>TPIS_FRATM</name>
<proteinExistence type="inferred from homology"/>
<feature type="chain" id="PRO_1000096500" description="Triosephosphate isomerase">
    <location>
        <begin position="1"/>
        <end position="253"/>
    </location>
</feature>
<feature type="active site" description="Electrophile" evidence="1">
    <location>
        <position position="93"/>
    </location>
</feature>
<feature type="active site" description="Proton acceptor" evidence="1">
    <location>
        <position position="165"/>
    </location>
</feature>
<feature type="binding site" evidence="1">
    <location>
        <begin position="8"/>
        <end position="10"/>
    </location>
    <ligand>
        <name>substrate</name>
    </ligand>
</feature>
<feature type="binding site" evidence="1">
    <location>
        <position position="171"/>
    </location>
    <ligand>
        <name>substrate</name>
    </ligand>
</feature>
<feature type="binding site" evidence="1">
    <location>
        <position position="210"/>
    </location>
    <ligand>
        <name>substrate</name>
    </ligand>
</feature>
<feature type="binding site" evidence="1">
    <location>
        <begin position="231"/>
        <end position="232"/>
    </location>
    <ligand>
        <name>substrate</name>
    </ligand>
</feature>